<gene>
    <name type="primary">plyA</name>
    <name type="ORF">NFIA_033040</name>
</gene>
<feature type="signal peptide" evidence="2">
    <location>
        <begin position="1"/>
        <end position="18"/>
    </location>
</feature>
<feature type="chain" id="PRO_0000394564" description="Probable pectate lyase A">
    <location>
        <begin position="19"/>
        <end position="321"/>
    </location>
</feature>
<feature type="active site" evidence="2">
    <location>
        <position position="220"/>
    </location>
</feature>
<feature type="binding site" evidence="1">
    <location>
        <position position="134"/>
    </location>
    <ligand>
        <name>Ca(2+)</name>
        <dbReference type="ChEBI" id="CHEBI:29108"/>
    </ligand>
</feature>
<feature type="binding site" evidence="1">
    <location>
        <position position="163"/>
    </location>
    <ligand>
        <name>Ca(2+)</name>
        <dbReference type="ChEBI" id="CHEBI:29108"/>
    </ligand>
</feature>
<feature type="binding site" evidence="1">
    <location>
        <position position="167"/>
    </location>
    <ligand>
        <name>Ca(2+)</name>
        <dbReference type="ChEBI" id="CHEBI:29108"/>
    </ligand>
</feature>
<feature type="glycosylation site" description="N-linked (GlcNAc...) asparagine" evidence="2">
    <location>
        <position position="93"/>
    </location>
</feature>
<feature type="glycosylation site" description="N-linked (GlcNAc...) asparagine" evidence="2">
    <location>
        <position position="238"/>
    </location>
</feature>
<keyword id="KW-0106">Calcium</keyword>
<keyword id="KW-0119">Carbohydrate metabolism</keyword>
<keyword id="KW-0961">Cell wall biogenesis/degradation</keyword>
<keyword id="KW-0325">Glycoprotein</keyword>
<keyword id="KW-0456">Lyase</keyword>
<keyword id="KW-0479">Metal-binding</keyword>
<keyword id="KW-0624">Polysaccharide degradation</keyword>
<keyword id="KW-1185">Reference proteome</keyword>
<keyword id="KW-0964">Secreted</keyword>
<keyword id="KW-0732">Signal</keyword>
<sequence length="321" mass="33837">MKFVATLIACGLSGLALAAPTATVDSLEKRGPNDAAFGYASLNGGTTGGAGGTTTTVSSYAAFTAAVSSDAKKVVYVSGPIKQSAKQVKVGSNTSIIGKDSTAVLEGFGLLVKEKSNVIIRNLGVKKVLAENGDAIGIQYSNNVWVDHVDVSSDRDHDKDYYDGLIDLTHAADYVTISNCYIHDHWKASLVGHSDNNGDEDTGHLRVTYANNYWSNINSRAPSLRFGTGHVYNSYFENVSDGINTRDGAQVLVESNQFVGSSKALYSTDAGYAVEKDNDFGGAKNTALKGTLTTVPYSYSLVGSSKVKSAVVGQAGQTLKF</sequence>
<proteinExistence type="inferred from homology"/>
<organism>
    <name type="scientific">Neosartorya fischeri (strain ATCC 1020 / DSM 3700 / CBS 544.65 / FGSC A1164 / JCM 1740 / NRRL 181 / WB 181)</name>
    <name type="common">Aspergillus fischerianus</name>
    <dbReference type="NCBI Taxonomy" id="331117"/>
    <lineage>
        <taxon>Eukaryota</taxon>
        <taxon>Fungi</taxon>
        <taxon>Dikarya</taxon>
        <taxon>Ascomycota</taxon>
        <taxon>Pezizomycotina</taxon>
        <taxon>Eurotiomycetes</taxon>
        <taxon>Eurotiomycetidae</taxon>
        <taxon>Eurotiales</taxon>
        <taxon>Aspergillaceae</taxon>
        <taxon>Aspergillus</taxon>
        <taxon>Aspergillus subgen. Fumigati</taxon>
    </lineage>
</organism>
<evidence type="ECO:0000250" key="1"/>
<evidence type="ECO:0000255" key="2"/>
<evidence type="ECO:0000305" key="3"/>
<comment type="function">
    <text evidence="1">Pectinolytic enzyme consist of four classes of enzymes: pectin lyase, polygalacturonase, pectin methylesterase and rhamnogalacturonase. Among pectinolytic enzymes, pectin lyase is the most important in depolymerization of pectin, since it cleaves internal glycosidic bonds of highly methylated pectins. Favors pectate, the anion, over pectin, the methyl ester (By similarity).</text>
</comment>
<comment type="catalytic activity">
    <reaction>
        <text>Eliminative cleavage of (1-&gt;4)-alpha-D-galacturonan to give oligosaccharides with 4-deoxy-alpha-D-galact-4-enuronosyl groups at their non-reducing ends.</text>
        <dbReference type="EC" id="4.2.2.2"/>
    </reaction>
</comment>
<comment type="cofactor">
    <cofactor evidence="1">
        <name>Ca(2+)</name>
        <dbReference type="ChEBI" id="CHEBI:29108"/>
    </cofactor>
    <text evidence="1">Binds 1 Ca(2+) ion per subunit.</text>
</comment>
<comment type="subcellular location">
    <subcellularLocation>
        <location evidence="1">Secreted</location>
    </subcellularLocation>
</comment>
<comment type="similarity">
    <text evidence="3">Belongs to the polysaccharide lyase 1 family.</text>
</comment>
<name>PLYA_NEOFI</name>
<dbReference type="EC" id="4.2.2.2"/>
<dbReference type="EMBL" id="DS027686">
    <property type="protein sequence ID" value="EAW23738.1"/>
    <property type="molecule type" value="Genomic_DNA"/>
</dbReference>
<dbReference type="RefSeq" id="XP_001265635.1">
    <property type="nucleotide sequence ID" value="XM_001265634.1"/>
</dbReference>
<dbReference type="SMR" id="A1CYB8"/>
<dbReference type="STRING" id="331117.A1CYB8"/>
<dbReference type="GlyCosmos" id="A1CYB8">
    <property type="glycosylation" value="2 sites, No reported glycans"/>
</dbReference>
<dbReference type="EnsemblFungi" id="EAW23738">
    <property type="protein sequence ID" value="EAW23738"/>
    <property type="gene ID" value="NFIA_033040"/>
</dbReference>
<dbReference type="GeneID" id="4592853"/>
<dbReference type="KEGG" id="nfi:NFIA_033040"/>
<dbReference type="VEuPathDB" id="FungiDB:NFIA_033040"/>
<dbReference type="eggNOG" id="ENOG502S66G">
    <property type="taxonomic scope" value="Eukaryota"/>
</dbReference>
<dbReference type="HOGENOM" id="CLU_021894_2_1_1"/>
<dbReference type="OMA" id="NYWIDHV"/>
<dbReference type="OrthoDB" id="1637350at2759"/>
<dbReference type="Proteomes" id="UP000006702">
    <property type="component" value="Unassembled WGS sequence"/>
</dbReference>
<dbReference type="GO" id="GO:0005576">
    <property type="term" value="C:extracellular region"/>
    <property type="evidence" value="ECO:0000250"/>
    <property type="project" value="UniProtKB"/>
</dbReference>
<dbReference type="GO" id="GO:0046872">
    <property type="term" value="F:metal ion binding"/>
    <property type="evidence" value="ECO:0007669"/>
    <property type="project" value="UniProtKB-KW"/>
</dbReference>
<dbReference type="GO" id="GO:0030570">
    <property type="term" value="F:pectate lyase activity"/>
    <property type="evidence" value="ECO:0000250"/>
    <property type="project" value="UniProtKB"/>
</dbReference>
<dbReference type="GO" id="GO:0071555">
    <property type="term" value="P:cell wall organization"/>
    <property type="evidence" value="ECO:0007669"/>
    <property type="project" value="UniProtKB-KW"/>
</dbReference>
<dbReference type="GO" id="GO:0045490">
    <property type="term" value="P:pectin catabolic process"/>
    <property type="evidence" value="ECO:0000250"/>
    <property type="project" value="UniProtKB"/>
</dbReference>
<dbReference type="FunFam" id="2.160.20.10:FF:000036">
    <property type="entry name" value="Pectate lyase A"/>
    <property type="match status" value="1"/>
</dbReference>
<dbReference type="Gene3D" id="2.160.20.10">
    <property type="entry name" value="Single-stranded right-handed beta-helix, Pectin lyase-like"/>
    <property type="match status" value="1"/>
</dbReference>
<dbReference type="InterPro" id="IPR002022">
    <property type="entry name" value="Pec_lyase"/>
</dbReference>
<dbReference type="InterPro" id="IPR012334">
    <property type="entry name" value="Pectin_lyas_fold"/>
</dbReference>
<dbReference type="InterPro" id="IPR011050">
    <property type="entry name" value="Pectin_lyase_fold/virulence"/>
</dbReference>
<dbReference type="InterPro" id="IPR045032">
    <property type="entry name" value="PEL"/>
</dbReference>
<dbReference type="PANTHER" id="PTHR31683">
    <property type="entry name" value="PECTATE LYASE 18-RELATED"/>
    <property type="match status" value="1"/>
</dbReference>
<dbReference type="PANTHER" id="PTHR31683:SF18">
    <property type="entry name" value="PECTATE LYASE 21-RELATED"/>
    <property type="match status" value="1"/>
</dbReference>
<dbReference type="Pfam" id="PF00544">
    <property type="entry name" value="Pectate_lyase_4"/>
    <property type="match status" value="1"/>
</dbReference>
<dbReference type="SMART" id="SM00656">
    <property type="entry name" value="Amb_all"/>
    <property type="match status" value="1"/>
</dbReference>
<dbReference type="SUPFAM" id="SSF51126">
    <property type="entry name" value="Pectin lyase-like"/>
    <property type="match status" value="1"/>
</dbReference>
<reference key="1">
    <citation type="journal article" date="2008" name="PLoS Genet.">
        <title>Genomic islands in the pathogenic filamentous fungus Aspergillus fumigatus.</title>
        <authorList>
            <person name="Fedorova N.D."/>
            <person name="Khaldi N."/>
            <person name="Joardar V.S."/>
            <person name="Maiti R."/>
            <person name="Amedeo P."/>
            <person name="Anderson M.J."/>
            <person name="Crabtree J."/>
            <person name="Silva J.C."/>
            <person name="Badger J.H."/>
            <person name="Albarraq A."/>
            <person name="Angiuoli S."/>
            <person name="Bussey H."/>
            <person name="Bowyer P."/>
            <person name="Cotty P.J."/>
            <person name="Dyer P.S."/>
            <person name="Egan A."/>
            <person name="Galens K."/>
            <person name="Fraser-Liggett C.M."/>
            <person name="Haas B.J."/>
            <person name="Inman J.M."/>
            <person name="Kent R."/>
            <person name="Lemieux S."/>
            <person name="Malavazi I."/>
            <person name="Orvis J."/>
            <person name="Roemer T."/>
            <person name="Ronning C.M."/>
            <person name="Sundaram J.P."/>
            <person name="Sutton G."/>
            <person name="Turner G."/>
            <person name="Venter J.C."/>
            <person name="White O.R."/>
            <person name="Whitty B.R."/>
            <person name="Youngman P."/>
            <person name="Wolfe K.H."/>
            <person name="Goldman G.H."/>
            <person name="Wortman J.R."/>
            <person name="Jiang B."/>
            <person name="Denning D.W."/>
            <person name="Nierman W.C."/>
        </authorList>
    </citation>
    <scope>NUCLEOTIDE SEQUENCE [LARGE SCALE GENOMIC DNA]</scope>
    <source>
        <strain>ATCC 1020 / DSM 3700 / CBS 544.65 / FGSC A1164 / JCM 1740 / NRRL 181 / WB 181</strain>
    </source>
</reference>
<accession>A1CYB8</accession>
<protein>
    <recommendedName>
        <fullName>Probable pectate lyase A</fullName>
        <ecNumber>4.2.2.2</ecNumber>
    </recommendedName>
</protein>